<proteinExistence type="inferred from homology"/>
<organism>
    <name type="scientific">Escherichia coli O157:H7 (strain EC4115 / EHEC)</name>
    <dbReference type="NCBI Taxonomy" id="444450"/>
    <lineage>
        <taxon>Bacteria</taxon>
        <taxon>Pseudomonadati</taxon>
        <taxon>Pseudomonadota</taxon>
        <taxon>Gammaproteobacteria</taxon>
        <taxon>Enterobacterales</taxon>
        <taxon>Enterobacteriaceae</taxon>
        <taxon>Escherichia</taxon>
    </lineage>
</organism>
<protein>
    <recommendedName>
        <fullName evidence="1">Ribosomal RNA large subunit methyltransferase F</fullName>
        <ecNumber evidence="1">2.1.1.181</ecNumber>
    </recommendedName>
    <alternativeName>
        <fullName evidence="1">23S rRNA mA1618 methyltransferase</fullName>
    </alternativeName>
    <alternativeName>
        <fullName evidence="1">rRNA adenine N-6-methyltransferase</fullName>
    </alternativeName>
</protein>
<feature type="chain" id="PRO_1000188520" description="Ribosomal RNA large subunit methyltransferase F">
    <location>
        <begin position="1"/>
        <end position="308"/>
    </location>
</feature>
<comment type="function">
    <text evidence="1">Specifically methylates the adenine in position 1618 of 23S rRNA.</text>
</comment>
<comment type="catalytic activity">
    <reaction evidence="1">
        <text>adenosine(1618) in 23S rRNA + S-adenosyl-L-methionine = N(6)-methyladenosine(1618) in 23S rRNA + S-adenosyl-L-homocysteine + H(+)</text>
        <dbReference type="Rhea" id="RHEA:16497"/>
        <dbReference type="Rhea" id="RHEA-COMP:10229"/>
        <dbReference type="Rhea" id="RHEA-COMP:10231"/>
        <dbReference type="ChEBI" id="CHEBI:15378"/>
        <dbReference type="ChEBI" id="CHEBI:57856"/>
        <dbReference type="ChEBI" id="CHEBI:59789"/>
        <dbReference type="ChEBI" id="CHEBI:74411"/>
        <dbReference type="ChEBI" id="CHEBI:74449"/>
        <dbReference type="EC" id="2.1.1.181"/>
    </reaction>
</comment>
<comment type="subcellular location">
    <subcellularLocation>
        <location evidence="1">Cytoplasm</location>
    </subcellularLocation>
</comment>
<comment type="similarity">
    <text evidence="1">Belongs to the methyltransferase superfamily. METTL16/RlmF family.</text>
</comment>
<gene>
    <name evidence="1" type="primary">rlmF</name>
    <name type="ordered locus">ECH74115_0957</name>
</gene>
<reference key="1">
    <citation type="journal article" date="2011" name="Proc. Natl. Acad. Sci. U.S.A.">
        <title>Genomic anatomy of Escherichia coli O157:H7 outbreaks.</title>
        <authorList>
            <person name="Eppinger M."/>
            <person name="Mammel M.K."/>
            <person name="Leclerc J.E."/>
            <person name="Ravel J."/>
            <person name="Cebula T.A."/>
        </authorList>
    </citation>
    <scope>NUCLEOTIDE SEQUENCE [LARGE SCALE GENOMIC DNA]</scope>
    <source>
        <strain>EC4115 / EHEC</strain>
    </source>
</reference>
<keyword id="KW-0963">Cytoplasm</keyword>
<keyword id="KW-0489">Methyltransferase</keyword>
<keyword id="KW-0698">rRNA processing</keyword>
<keyword id="KW-0949">S-adenosyl-L-methionine</keyword>
<keyword id="KW-0808">Transferase</keyword>
<evidence type="ECO:0000255" key="1">
    <source>
        <dbReference type="HAMAP-Rule" id="MF_01848"/>
    </source>
</evidence>
<accession>B5YS99</accession>
<name>RLMF_ECO5E</name>
<dbReference type="EC" id="2.1.1.181" evidence="1"/>
<dbReference type="EMBL" id="CP001164">
    <property type="protein sequence ID" value="ACI35411.1"/>
    <property type="molecule type" value="Genomic_DNA"/>
</dbReference>
<dbReference type="RefSeq" id="WP_001301511.1">
    <property type="nucleotide sequence ID" value="NC_011353.1"/>
</dbReference>
<dbReference type="SMR" id="B5YS99"/>
<dbReference type="KEGG" id="ecf:ECH74115_0957"/>
<dbReference type="HOGENOM" id="CLU_027534_3_0_6"/>
<dbReference type="GO" id="GO:0005737">
    <property type="term" value="C:cytoplasm"/>
    <property type="evidence" value="ECO:0007669"/>
    <property type="project" value="UniProtKB-SubCell"/>
</dbReference>
<dbReference type="GO" id="GO:0052907">
    <property type="term" value="F:23S rRNA (adenine(1618)-N(6))-methyltransferase activity"/>
    <property type="evidence" value="ECO:0007669"/>
    <property type="project" value="UniProtKB-EC"/>
</dbReference>
<dbReference type="GO" id="GO:0070475">
    <property type="term" value="P:rRNA base methylation"/>
    <property type="evidence" value="ECO:0007669"/>
    <property type="project" value="TreeGrafter"/>
</dbReference>
<dbReference type="FunFam" id="3.40.50.150:FF:000045">
    <property type="entry name" value="Ribosomal RNA large subunit methyltransferase F"/>
    <property type="match status" value="1"/>
</dbReference>
<dbReference type="Gene3D" id="3.40.50.150">
    <property type="entry name" value="Vaccinia Virus protein VP39"/>
    <property type="match status" value="1"/>
</dbReference>
<dbReference type="HAMAP" id="MF_01848">
    <property type="entry name" value="23SrRNA_methyltr_F"/>
    <property type="match status" value="1"/>
</dbReference>
<dbReference type="InterPro" id="IPR010286">
    <property type="entry name" value="METTL16/RlmF"/>
</dbReference>
<dbReference type="InterPro" id="IPR016909">
    <property type="entry name" value="rRNA_lsu_MeTfrase_F"/>
</dbReference>
<dbReference type="InterPro" id="IPR029063">
    <property type="entry name" value="SAM-dependent_MTases_sf"/>
</dbReference>
<dbReference type="NCBIfam" id="NF008725">
    <property type="entry name" value="PRK11727.1"/>
    <property type="match status" value="1"/>
</dbReference>
<dbReference type="PANTHER" id="PTHR13393:SF0">
    <property type="entry name" value="RNA N6-ADENOSINE-METHYLTRANSFERASE METTL16"/>
    <property type="match status" value="1"/>
</dbReference>
<dbReference type="PANTHER" id="PTHR13393">
    <property type="entry name" value="SAM-DEPENDENT METHYLTRANSFERASE"/>
    <property type="match status" value="1"/>
</dbReference>
<dbReference type="Pfam" id="PF05971">
    <property type="entry name" value="Methyltransf_10"/>
    <property type="match status" value="1"/>
</dbReference>
<dbReference type="PIRSF" id="PIRSF029038">
    <property type="entry name" value="Mtase_YbiN_prd"/>
    <property type="match status" value="1"/>
</dbReference>
<dbReference type="SUPFAM" id="SSF53335">
    <property type="entry name" value="S-adenosyl-L-methionine-dependent methyltransferases"/>
    <property type="match status" value="1"/>
</dbReference>
<sequence>MSAQKPGLHPRNRHHSRYDLATLCQVNPELKQFLTLTPAGEQSVDFANPLAVKALNKALLAHFYAVANWDIPDGFLCPPVPGRADYIHHLADLLAEASGTIPANASILDIGVGANCIYPLIGVHEYGWRFTGSETSSQALSSAQAIISANPGLNRAIRLRRQKESGAIFNGIIHKNEQYDATLCNPPFHDSAAAARAGSECKRRNLGLNKDDALNFGGQQQELWCEGGEVTFIKKMIEESKGFAKQVMWFTSLVSRGENLPPLYRALTDVGAVKVVKKEMAQGQKQSRFIAWTFMNDEQRRRFVNRQR</sequence>